<proteinExistence type="inferred from homology"/>
<evidence type="ECO:0000305" key="1"/>
<sequence>MTQQLPILSLKKIYSGKVRDLYEIDDKRMLMVTSDRLSAFDVILDDPIPRKGEILTQISNFWFNKLAHIMPNHFTGDSVYDVLPKEEADLIRDRAVVCKRLNPIKIESIVRGYLTGSGLKDYKQTGTICGLKLPEGLVEASKLPEAIFTPSSKEEVGNHDINISYAECEKLIGADLAAQVKEKAIALYTVAAEYALTKGIIICDTKFEFGLDENGTLTLMDEVLTPDSSRFWSVDTYQAGTNPPSFDKQFVRDWLENSGWNKQAPAPKVPENIIQKTVDKYQEALDLLTK</sequence>
<reference key="1">
    <citation type="journal article" date="1995" name="Science">
        <title>Whole-genome random sequencing and assembly of Haemophilus influenzae Rd.</title>
        <authorList>
            <person name="Fleischmann R.D."/>
            <person name="Adams M.D."/>
            <person name="White O."/>
            <person name="Clayton R.A."/>
            <person name="Kirkness E.F."/>
            <person name="Kerlavage A.R."/>
            <person name="Bult C.J."/>
            <person name="Tomb J.-F."/>
            <person name="Dougherty B.A."/>
            <person name="Merrick J.M."/>
            <person name="McKenney K."/>
            <person name="Sutton G.G."/>
            <person name="FitzHugh W."/>
            <person name="Fields C.A."/>
            <person name="Gocayne J.D."/>
            <person name="Scott J.D."/>
            <person name="Shirley R."/>
            <person name="Liu L.-I."/>
            <person name="Glodek A."/>
            <person name="Kelley J.M."/>
            <person name="Weidman J.F."/>
            <person name="Phillips C.A."/>
            <person name="Spriggs T."/>
            <person name="Hedblom E."/>
            <person name="Cotton M.D."/>
            <person name="Utterback T.R."/>
            <person name="Hanna M.C."/>
            <person name="Nguyen D.T."/>
            <person name="Saudek D.M."/>
            <person name="Brandon R.C."/>
            <person name="Fine L.D."/>
            <person name="Fritchman J.L."/>
            <person name="Fuhrmann J.L."/>
            <person name="Geoghagen N.S.M."/>
            <person name="Gnehm C.L."/>
            <person name="McDonald L.A."/>
            <person name="Small K.V."/>
            <person name="Fraser C.M."/>
            <person name="Smith H.O."/>
            <person name="Venter J.C."/>
        </authorList>
    </citation>
    <scope>NUCLEOTIDE SEQUENCE [LARGE SCALE GENOMIC DNA]</scope>
    <source>
        <strain>ATCC 51907 / DSM 11121 / KW20 / Rd</strain>
    </source>
</reference>
<accession>P43851</accession>
<dbReference type="EC" id="6.3.2.6"/>
<dbReference type="EMBL" id="L42023">
    <property type="protein sequence ID" value="AAC23372.1"/>
    <property type="status" value="ALT_INIT"/>
    <property type="molecule type" value="Genomic_DNA"/>
</dbReference>
<dbReference type="PIR" id="E64138">
    <property type="entry name" value="E64138"/>
</dbReference>
<dbReference type="RefSeq" id="NP_439867.2">
    <property type="nucleotide sequence ID" value="NC_000907.1"/>
</dbReference>
<dbReference type="SMR" id="P43851"/>
<dbReference type="STRING" id="71421.HI_1726"/>
<dbReference type="EnsemblBacteria" id="AAC23372">
    <property type="protein sequence ID" value="AAC23372"/>
    <property type="gene ID" value="HI_1726"/>
</dbReference>
<dbReference type="KEGG" id="hin:HI_1726"/>
<dbReference type="PATRIC" id="fig|71421.8.peg.1805"/>
<dbReference type="eggNOG" id="COG0152">
    <property type="taxonomic scope" value="Bacteria"/>
</dbReference>
<dbReference type="HOGENOM" id="CLU_045637_0_2_6"/>
<dbReference type="OrthoDB" id="9801549at2"/>
<dbReference type="PhylomeDB" id="P43851"/>
<dbReference type="BioCyc" id="HINF71421:G1GJ1-1741-MONOMER"/>
<dbReference type="UniPathway" id="UPA00074">
    <property type="reaction ID" value="UER00131"/>
</dbReference>
<dbReference type="Proteomes" id="UP000000579">
    <property type="component" value="Chromosome"/>
</dbReference>
<dbReference type="GO" id="GO:0005524">
    <property type="term" value="F:ATP binding"/>
    <property type="evidence" value="ECO:0007669"/>
    <property type="project" value="UniProtKB-KW"/>
</dbReference>
<dbReference type="GO" id="GO:0004639">
    <property type="term" value="F:phosphoribosylaminoimidazolesuccinocarboxamide synthase activity"/>
    <property type="evidence" value="ECO:0000318"/>
    <property type="project" value="GO_Central"/>
</dbReference>
<dbReference type="GO" id="GO:0006189">
    <property type="term" value="P:'de novo' IMP biosynthetic process"/>
    <property type="evidence" value="ECO:0000318"/>
    <property type="project" value="GO_Central"/>
</dbReference>
<dbReference type="CDD" id="cd01414">
    <property type="entry name" value="SAICAR_synt_Sc"/>
    <property type="match status" value="1"/>
</dbReference>
<dbReference type="FunFam" id="3.30.200.20:FF:000365">
    <property type="entry name" value="Phosphoribosylaminoimidazole-succinocarboxamide synthase"/>
    <property type="match status" value="1"/>
</dbReference>
<dbReference type="FunFam" id="3.30.470.20:FF:000015">
    <property type="entry name" value="Phosphoribosylaminoimidazole-succinocarboxamide synthase"/>
    <property type="match status" value="1"/>
</dbReference>
<dbReference type="Gene3D" id="3.30.470.20">
    <property type="entry name" value="ATP-grasp fold, B domain"/>
    <property type="match status" value="1"/>
</dbReference>
<dbReference type="Gene3D" id="3.30.200.20">
    <property type="entry name" value="Phosphorylase Kinase, domain 1"/>
    <property type="match status" value="1"/>
</dbReference>
<dbReference type="HAMAP" id="MF_00137">
    <property type="entry name" value="SAICAR_synth"/>
    <property type="match status" value="1"/>
</dbReference>
<dbReference type="InterPro" id="IPR028923">
    <property type="entry name" value="SAICAR_synt/ADE2_N"/>
</dbReference>
<dbReference type="InterPro" id="IPR001636">
    <property type="entry name" value="SAICAR_synth"/>
</dbReference>
<dbReference type="InterPro" id="IPR018236">
    <property type="entry name" value="SAICAR_synthetase_CS"/>
</dbReference>
<dbReference type="NCBIfam" id="NF010568">
    <property type="entry name" value="PRK13961.1"/>
    <property type="match status" value="1"/>
</dbReference>
<dbReference type="NCBIfam" id="TIGR00081">
    <property type="entry name" value="purC"/>
    <property type="match status" value="1"/>
</dbReference>
<dbReference type="PANTHER" id="PTHR43700">
    <property type="entry name" value="PHOSPHORIBOSYLAMINOIMIDAZOLE-SUCCINOCARBOXAMIDE SYNTHASE"/>
    <property type="match status" value="1"/>
</dbReference>
<dbReference type="PANTHER" id="PTHR43700:SF1">
    <property type="entry name" value="PHOSPHORIBOSYLAMINOIMIDAZOLE-SUCCINOCARBOXAMIDE SYNTHASE"/>
    <property type="match status" value="1"/>
</dbReference>
<dbReference type="Pfam" id="PF01259">
    <property type="entry name" value="SAICAR_synt"/>
    <property type="match status" value="1"/>
</dbReference>
<dbReference type="SUPFAM" id="SSF56104">
    <property type="entry name" value="SAICAR synthase-like"/>
    <property type="match status" value="1"/>
</dbReference>
<dbReference type="PROSITE" id="PS01057">
    <property type="entry name" value="SAICAR_SYNTHETASE_1"/>
    <property type="match status" value="1"/>
</dbReference>
<dbReference type="PROSITE" id="PS01058">
    <property type="entry name" value="SAICAR_SYNTHETASE_2"/>
    <property type="match status" value="1"/>
</dbReference>
<name>PUR7_HAEIN</name>
<protein>
    <recommendedName>
        <fullName>Phosphoribosylaminoimidazole-succinocarboxamide synthase</fullName>
        <ecNumber>6.3.2.6</ecNumber>
    </recommendedName>
    <alternativeName>
        <fullName>SAICAR synthetase</fullName>
    </alternativeName>
</protein>
<comment type="catalytic activity">
    <reaction>
        <text>5-amino-1-(5-phospho-D-ribosyl)imidazole-4-carboxylate + L-aspartate + ATP = (2S)-2-[5-amino-1-(5-phospho-beta-D-ribosyl)imidazole-4-carboxamido]succinate + ADP + phosphate + 2 H(+)</text>
        <dbReference type="Rhea" id="RHEA:22628"/>
        <dbReference type="ChEBI" id="CHEBI:15378"/>
        <dbReference type="ChEBI" id="CHEBI:29991"/>
        <dbReference type="ChEBI" id="CHEBI:30616"/>
        <dbReference type="ChEBI" id="CHEBI:43474"/>
        <dbReference type="ChEBI" id="CHEBI:58443"/>
        <dbReference type="ChEBI" id="CHEBI:77657"/>
        <dbReference type="ChEBI" id="CHEBI:456216"/>
        <dbReference type="EC" id="6.3.2.6"/>
    </reaction>
</comment>
<comment type="pathway">
    <text>Purine metabolism; IMP biosynthesis via de novo pathway; 5-amino-1-(5-phospho-D-ribosyl)imidazole-4-carboxamide from 5-amino-1-(5-phospho-D-ribosyl)imidazole-4-carboxylate: step 1/2.</text>
</comment>
<comment type="similarity">
    <text evidence="1">Belongs to the SAICAR synthetase family.</text>
</comment>
<comment type="sequence caution" evidence="1">
    <conflict type="erroneous initiation">
        <sequence resource="EMBL-CDS" id="AAC23372"/>
    </conflict>
</comment>
<keyword id="KW-0067">ATP-binding</keyword>
<keyword id="KW-0436">Ligase</keyword>
<keyword id="KW-0547">Nucleotide-binding</keyword>
<keyword id="KW-0658">Purine biosynthesis</keyword>
<keyword id="KW-1185">Reference proteome</keyword>
<organism>
    <name type="scientific">Haemophilus influenzae (strain ATCC 51907 / DSM 11121 / KW20 / Rd)</name>
    <dbReference type="NCBI Taxonomy" id="71421"/>
    <lineage>
        <taxon>Bacteria</taxon>
        <taxon>Pseudomonadati</taxon>
        <taxon>Pseudomonadota</taxon>
        <taxon>Gammaproteobacteria</taxon>
        <taxon>Pasteurellales</taxon>
        <taxon>Pasteurellaceae</taxon>
        <taxon>Haemophilus</taxon>
    </lineage>
</organism>
<gene>
    <name type="primary">purC</name>
    <name type="ordered locus">HI_1726</name>
</gene>
<feature type="chain" id="PRO_0000100831" description="Phosphoribosylaminoimidazole-succinocarboxamide synthase">
    <location>
        <begin position="1"/>
        <end position="290"/>
    </location>
</feature>